<feature type="chain" id="PRO_0000335529" description="Probable translation initiation factor IF-2">
    <location>
        <begin position="1"/>
        <end position="602"/>
    </location>
</feature>
<feature type="domain" description="tr-type G">
    <location>
        <begin position="18"/>
        <end position="233"/>
    </location>
</feature>
<feature type="region of interest" description="G1" evidence="1">
    <location>
        <begin position="27"/>
        <end position="34"/>
    </location>
</feature>
<feature type="region of interest" description="G2" evidence="1">
    <location>
        <begin position="52"/>
        <end position="56"/>
    </location>
</feature>
<feature type="region of interest" description="G3" evidence="1">
    <location>
        <begin position="88"/>
        <end position="91"/>
    </location>
</feature>
<feature type="region of interest" description="G4" evidence="1">
    <location>
        <begin position="142"/>
        <end position="145"/>
    </location>
</feature>
<feature type="region of interest" description="G5" evidence="1">
    <location>
        <begin position="210"/>
        <end position="212"/>
    </location>
</feature>
<feature type="binding site" evidence="2">
    <location>
        <begin position="27"/>
        <end position="34"/>
    </location>
    <ligand>
        <name>GTP</name>
        <dbReference type="ChEBI" id="CHEBI:37565"/>
    </ligand>
</feature>
<feature type="binding site" evidence="2">
    <location>
        <begin position="88"/>
        <end position="92"/>
    </location>
    <ligand>
        <name>GTP</name>
        <dbReference type="ChEBI" id="CHEBI:37565"/>
    </ligand>
</feature>
<feature type="binding site" evidence="2">
    <location>
        <begin position="142"/>
        <end position="145"/>
    </location>
    <ligand>
        <name>GTP</name>
        <dbReference type="ChEBI" id="CHEBI:37565"/>
    </ligand>
</feature>
<name>IF2P_METTP</name>
<comment type="function">
    <text evidence="2">Function in general translation initiation by promoting the binding of the formylmethionine-tRNA to ribosomes. Seems to function along with eIF-2.</text>
</comment>
<comment type="similarity">
    <text evidence="2">Belongs to the TRAFAC class translation factor GTPase superfamily. Classic translation factor GTPase family. IF-2 subfamily.</text>
</comment>
<gene>
    <name evidence="2" type="primary">infB</name>
    <name type="ordered locus">Mthe_1302</name>
</gene>
<proteinExistence type="inferred from homology"/>
<protein>
    <recommendedName>
        <fullName evidence="2">Probable translation initiation factor IF-2</fullName>
    </recommendedName>
</protein>
<sequence>MRQRSKKGMRSKEEVSQLRTPIVCVMGHVDHGKTTLLDRIRGTTVAQYEAGAITQHIGATEIPLSVIQQFCGSGFKANLMVPGLLFIDTPGHHAFTSLRSRGGSLADLAILIVDINEGFQPQTIESINILKRFKTPFVVAANKIDRIPGWRPVENAPMEKSLAGQTERVVETLETKIYELVGELYKYGFDSNRYDRIADFTKTVGIIPVSAITGEGIPDLLLVLVGLAQRFLKQNLVIESSRPGMGTILEVKEERGLGTTLDVILYDGMISVGDTIVVGTPREPIITKVRALLKPRPLKEIRSEERFTPVKHVVAASGIKVSAPKLETALAGSTIRVVGEGEDPEAIAKEIRSEIEAVRIDTDTVGVILKADTIGSLEGLVGELRAKNIPIHVADVGPVTRRDVIRAAAIKDPLLSVILGFNVEILPDALSEIQKLDIPVFQSDVIYTLLESYEEWMEEKKMQMEQERLEAIVKPGCVRILPDCVFRQSKPAIVGVQVVGGTISHNVPLIREDGAVVGTIRGIQQRNENIPMATVGQEVAISIDGPTVGRQIHEGDLLYVNIPEKHARIIEQELKQKMSQDEIEVFEKFLEIKRKKDMFWGR</sequence>
<keyword id="KW-0342">GTP-binding</keyword>
<keyword id="KW-0396">Initiation factor</keyword>
<keyword id="KW-0547">Nucleotide-binding</keyword>
<keyword id="KW-0648">Protein biosynthesis</keyword>
<keyword id="KW-1185">Reference proteome</keyword>
<evidence type="ECO:0000250" key="1"/>
<evidence type="ECO:0000255" key="2">
    <source>
        <dbReference type="HAMAP-Rule" id="MF_00100"/>
    </source>
</evidence>
<accession>A0B8Q6</accession>
<dbReference type="EMBL" id="CP000477">
    <property type="protein sequence ID" value="ABK15080.1"/>
    <property type="molecule type" value="Genomic_DNA"/>
</dbReference>
<dbReference type="RefSeq" id="WP_011696472.1">
    <property type="nucleotide sequence ID" value="NC_008553.1"/>
</dbReference>
<dbReference type="SMR" id="A0B8Q6"/>
<dbReference type="STRING" id="349307.Mthe_1302"/>
<dbReference type="GeneID" id="4462943"/>
<dbReference type="KEGG" id="mtp:Mthe_1302"/>
<dbReference type="HOGENOM" id="CLU_002656_3_3_2"/>
<dbReference type="OrthoDB" id="30957at2157"/>
<dbReference type="Proteomes" id="UP000000674">
    <property type="component" value="Chromosome"/>
</dbReference>
<dbReference type="GO" id="GO:0005737">
    <property type="term" value="C:cytoplasm"/>
    <property type="evidence" value="ECO:0007669"/>
    <property type="project" value="TreeGrafter"/>
</dbReference>
<dbReference type="GO" id="GO:0005525">
    <property type="term" value="F:GTP binding"/>
    <property type="evidence" value="ECO:0007669"/>
    <property type="project" value="UniProtKB-KW"/>
</dbReference>
<dbReference type="GO" id="GO:0003924">
    <property type="term" value="F:GTPase activity"/>
    <property type="evidence" value="ECO:0007669"/>
    <property type="project" value="UniProtKB-UniRule"/>
</dbReference>
<dbReference type="GO" id="GO:0003743">
    <property type="term" value="F:translation initiation factor activity"/>
    <property type="evidence" value="ECO:0007669"/>
    <property type="project" value="UniProtKB-UniRule"/>
</dbReference>
<dbReference type="CDD" id="cd03703">
    <property type="entry name" value="aeIF5B_II"/>
    <property type="match status" value="1"/>
</dbReference>
<dbReference type="CDD" id="cd16266">
    <property type="entry name" value="IF2_aeIF5B_IV"/>
    <property type="match status" value="1"/>
</dbReference>
<dbReference type="CDD" id="cd01887">
    <property type="entry name" value="IF2_eIF5B"/>
    <property type="match status" value="1"/>
</dbReference>
<dbReference type="FunFam" id="3.40.50.300:FF:000112">
    <property type="entry name" value="Eukaryotic translation initiation factor 5B"/>
    <property type="match status" value="1"/>
</dbReference>
<dbReference type="FunFam" id="2.40.30.10:FF:000013">
    <property type="entry name" value="eukaryotic translation initiation factor 5B"/>
    <property type="match status" value="1"/>
</dbReference>
<dbReference type="FunFam" id="3.40.50.10050:FF:000001">
    <property type="entry name" value="Translation initiation factor IF-2"/>
    <property type="match status" value="1"/>
</dbReference>
<dbReference type="Gene3D" id="3.40.50.300">
    <property type="entry name" value="P-loop containing nucleotide triphosphate hydrolases"/>
    <property type="match status" value="1"/>
</dbReference>
<dbReference type="Gene3D" id="2.40.30.10">
    <property type="entry name" value="Translation factors"/>
    <property type="match status" value="2"/>
</dbReference>
<dbReference type="Gene3D" id="3.40.50.10050">
    <property type="entry name" value="Translation initiation factor IF- 2, domain 3"/>
    <property type="match status" value="1"/>
</dbReference>
<dbReference type="HAMAP" id="MF_00100_A">
    <property type="entry name" value="IF_2_A"/>
    <property type="match status" value="1"/>
</dbReference>
<dbReference type="InterPro" id="IPR029459">
    <property type="entry name" value="EFTU-type"/>
</dbReference>
<dbReference type="InterPro" id="IPR027417">
    <property type="entry name" value="P-loop_NTPase"/>
</dbReference>
<dbReference type="InterPro" id="IPR005225">
    <property type="entry name" value="Small_GTP-bd"/>
</dbReference>
<dbReference type="InterPro" id="IPR000795">
    <property type="entry name" value="T_Tr_GTP-bd_dom"/>
</dbReference>
<dbReference type="InterPro" id="IPR004544">
    <property type="entry name" value="TF_aIF-2_arc"/>
</dbReference>
<dbReference type="InterPro" id="IPR015760">
    <property type="entry name" value="TIF_IF2"/>
</dbReference>
<dbReference type="InterPro" id="IPR023115">
    <property type="entry name" value="TIF_IF2_dom3"/>
</dbReference>
<dbReference type="InterPro" id="IPR036925">
    <property type="entry name" value="TIF_IF2_dom3_sf"/>
</dbReference>
<dbReference type="InterPro" id="IPR009000">
    <property type="entry name" value="Transl_B-barrel_sf"/>
</dbReference>
<dbReference type="NCBIfam" id="TIGR00491">
    <property type="entry name" value="aIF-2"/>
    <property type="match status" value="1"/>
</dbReference>
<dbReference type="NCBIfam" id="NF003078">
    <property type="entry name" value="PRK04004.1"/>
    <property type="match status" value="1"/>
</dbReference>
<dbReference type="NCBIfam" id="NF011418">
    <property type="entry name" value="PRK14845.1"/>
    <property type="match status" value="1"/>
</dbReference>
<dbReference type="NCBIfam" id="TIGR00231">
    <property type="entry name" value="small_GTP"/>
    <property type="match status" value="1"/>
</dbReference>
<dbReference type="PANTHER" id="PTHR43381:SF4">
    <property type="entry name" value="EUKARYOTIC TRANSLATION INITIATION FACTOR 5B"/>
    <property type="match status" value="1"/>
</dbReference>
<dbReference type="PANTHER" id="PTHR43381">
    <property type="entry name" value="TRANSLATION INITIATION FACTOR IF-2-RELATED"/>
    <property type="match status" value="1"/>
</dbReference>
<dbReference type="Pfam" id="PF00009">
    <property type="entry name" value="GTP_EFTU"/>
    <property type="match status" value="1"/>
</dbReference>
<dbReference type="Pfam" id="PF14578">
    <property type="entry name" value="GTP_EFTU_D4"/>
    <property type="match status" value="1"/>
</dbReference>
<dbReference type="Pfam" id="PF11987">
    <property type="entry name" value="IF-2"/>
    <property type="match status" value="1"/>
</dbReference>
<dbReference type="PRINTS" id="PR00315">
    <property type="entry name" value="ELONGATNFCT"/>
</dbReference>
<dbReference type="SUPFAM" id="SSF52156">
    <property type="entry name" value="Initiation factor IF2/eIF5b, domain 3"/>
    <property type="match status" value="1"/>
</dbReference>
<dbReference type="SUPFAM" id="SSF52540">
    <property type="entry name" value="P-loop containing nucleoside triphosphate hydrolases"/>
    <property type="match status" value="1"/>
</dbReference>
<dbReference type="SUPFAM" id="SSF50447">
    <property type="entry name" value="Translation proteins"/>
    <property type="match status" value="1"/>
</dbReference>
<dbReference type="PROSITE" id="PS51722">
    <property type="entry name" value="G_TR_2"/>
    <property type="match status" value="1"/>
</dbReference>
<reference key="1">
    <citation type="submission" date="2006-10" db="EMBL/GenBank/DDBJ databases">
        <title>Complete sequence of Methanosaeta thermophila PT.</title>
        <authorList>
            <consortium name="US DOE Joint Genome Institute"/>
            <person name="Copeland A."/>
            <person name="Lucas S."/>
            <person name="Lapidus A."/>
            <person name="Barry K."/>
            <person name="Detter J.C."/>
            <person name="Glavina del Rio T."/>
            <person name="Hammon N."/>
            <person name="Israni S."/>
            <person name="Pitluck S."/>
            <person name="Chain P."/>
            <person name="Malfatti S."/>
            <person name="Shin M."/>
            <person name="Vergez L."/>
            <person name="Schmutz J."/>
            <person name="Larimer F."/>
            <person name="Land M."/>
            <person name="Hauser L."/>
            <person name="Kyrpides N."/>
            <person name="Kim E."/>
            <person name="Smith K.S."/>
            <person name="Ingram-Smith C."/>
            <person name="Richardson P."/>
        </authorList>
    </citation>
    <scope>NUCLEOTIDE SEQUENCE [LARGE SCALE GENOMIC DNA]</scope>
    <source>
        <strain>DSM 6194 / JCM 14653 / NBRC 101360 / PT</strain>
    </source>
</reference>
<organism>
    <name type="scientific">Methanothrix thermoacetophila (strain DSM 6194 / JCM 14653 / NBRC 101360 / PT)</name>
    <name type="common">Methanosaeta thermophila</name>
    <dbReference type="NCBI Taxonomy" id="349307"/>
    <lineage>
        <taxon>Archaea</taxon>
        <taxon>Methanobacteriati</taxon>
        <taxon>Methanobacteriota</taxon>
        <taxon>Stenosarchaea group</taxon>
        <taxon>Methanomicrobia</taxon>
        <taxon>Methanotrichales</taxon>
        <taxon>Methanotrichaceae</taxon>
        <taxon>Methanothrix</taxon>
    </lineage>
</organism>